<comment type="catalytic activity">
    <reaction>
        <text>3-methyl-2-oxobutanoate + 2 oxidized [2Fe-2S]-[ferredoxin] + CoA = 2-methylpropanoyl-CoA + 2 reduced [2Fe-2S]-[ferredoxin] + CO2 + H(+)</text>
        <dbReference type="Rhea" id="RHEA:11712"/>
        <dbReference type="Rhea" id="RHEA-COMP:10000"/>
        <dbReference type="Rhea" id="RHEA-COMP:10001"/>
        <dbReference type="ChEBI" id="CHEBI:11851"/>
        <dbReference type="ChEBI" id="CHEBI:15378"/>
        <dbReference type="ChEBI" id="CHEBI:16526"/>
        <dbReference type="ChEBI" id="CHEBI:33737"/>
        <dbReference type="ChEBI" id="CHEBI:33738"/>
        <dbReference type="ChEBI" id="CHEBI:57287"/>
        <dbReference type="ChEBI" id="CHEBI:57338"/>
        <dbReference type="EC" id="1.2.7.7"/>
    </reaction>
</comment>
<comment type="cofactor">
    <cofactor evidence="1">
        <name>[4Fe-4S] cluster</name>
        <dbReference type="ChEBI" id="CHEBI:49883"/>
    </cofactor>
    <text evidence="1">Binds 2 [4Fe-4S] clusters.</text>
</comment>
<comment type="subunit">
    <text evidence="1">Heterotetramer of one alpha, one beta, one delta and one gamma chain.</text>
</comment>
<evidence type="ECO:0000250" key="1"/>
<evidence type="ECO:0000255" key="2"/>
<evidence type="ECO:0000255" key="3">
    <source>
        <dbReference type="PROSITE-ProRule" id="PRU00711"/>
    </source>
</evidence>
<feature type="chain" id="PRO_0000099963" description="Ketoisovalerate oxidoreductase subunit VorD">
    <location>
        <begin position="1"/>
        <end position="105"/>
    </location>
</feature>
<feature type="domain" description="4Fe-4S ferredoxin-type 1" evidence="3">
    <location>
        <begin position="44"/>
        <end position="73"/>
    </location>
</feature>
<feature type="domain" description="4Fe-4S ferredoxin-type 2" evidence="3">
    <location>
        <begin position="74"/>
        <end position="103"/>
    </location>
</feature>
<feature type="binding site" evidence="2">
    <location>
        <position position="53"/>
    </location>
    <ligand>
        <name>[4Fe-4S] cluster</name>
        <dbReference type="ChEBI" id="CHEBI:49883"/>
        <label>1</label>
    </ligand>
</feature>
<feature type="binding site" evidence="2">
    <location>
        <position position="56"/>
    </location>
    <ligand>
        <name>[4Fe-4S] cluster</name>
        <dbReference type="ChEBI" id="CHEBI:49883"/>
        <label>1</label>
    </ligand>
</feature>
<feature type="binding site" evidence="2">
    <location>
        <position position="59"/>
    </location>
    <ligand>
        <name>[4Fe-4S] cluster</name>
        <dbReference type="ChEBI" id="CHEBI:49883"/>
        <label>1</label>
    </ligand>
</feature>
<feature type="binding site" evidence="2">
    <location>
        <position position="63"/>
    </location>
    <ligand>
        <name>[4Fe-4S] cluster</name>
        <dbReference type="ChEBI" id="CHEBI:49883"/>
        <label>2</label>
    </ligand>
</feature>
<feature type="binding site" evidence="2">
    <location>
        <position position="83"/>
    </location>
    <ligand>
        <name>[4Fe-4S] cluster</name>
        <dbReference type="ChEBI" id="CHEBI:49883"/>
        <label>2</label>
    </ligand>
</feature>
<feature type="binding site" evidence="2">
    <location>
        <position position="86"/>
    </location>
    <ligand>
        <name>[4Fe-4S] cluster</name>
        <dbReference type="ChEBI" id="CHEBI:49883"/>
        <label>2</label>
    </ligand>
</feature>
<feature type="binding site" evidence="2">
    <location>
        <position position="89"/>
    </location>
    <ligand>
        <name>[4Fe-4S] cluster</name>
        <dbReference type="ChEBI" id="CHEBI:49883"/>
        <label>2</label>
    </ligand>
</feature>
<feature type="binding site" evidence="2">
    <location>
        <position position="93"/>
    </location>
    <ligand>
        <name>[4Fe-4S] cluster</name>
        <dbReference type="ChEBI" id="CHEBI:49883"/>
        <label>1</label>
    </ligand>
</feature>
<sequence>MNTLFGKAKEEAKPITPKSVDEYPEAPVSLGITLVNFTGDWRTFMPVIDESKCVKCYICWKYCPEPAIYIKEDGFVAIDYDYCKGCGICANECPTKAITMVREEK</sequence>
<gene>
    <name type="primary">vorD</name>
    <name type="ordered locus">PH0679</name>
</gene>
<protein>
    <recommendedName>
        <fullName>Ketoisovalerate oxidoreductase subunit VorD</fullName>
        <shortName>VOR</shortName>
        <ecNumber>1.2.7.7</ecNumber>
    </recommendedName>
    <alternativeName>
        <fullName>2-oxoisovalerate ferredoxin reductase subunit delta</fullName>
    </alternativeName>
    <alternativeName>
        <fullName>2-oxoisovalerate oxidoreductase delta chain</fullName>
    </alternativeName>
</protein>
<name>VORD_PYRHO</name>
<proteinExistence type="inferred from homology"/>
<dbReference type="EC" id="1.2.7.7"/>
<dbReference type="EMBL" id="BA000001">
    <property type="protein sequence ID" value="BAA29770.1"/>
    <property type="molecule type" value="Genomic_DNA"/>
</dbReference>
<dbReference type="PIR" id="H71113">
    <property type="entry name" value="H71113"/>
</dbReference>
<dbReference type="RefSeq" id="WP_010884772.1">
    <property type="nucleotide sequence ID" value="NC_000961.1"/>
</dbReference>
<dbReference type="SMR" id="O58412"/>
<dbReference type="STRING" id="70601.gene:9377624"/>
<dbReference type="EnsemblBacteria" id="BAA29770">
    <property type="protein sequence ID" value="BAA29770"/>
    <property type="gene ID" value="BAA29770"/>
</dbReference>
<dbReference type="GeneID" id="1443007"/>
<dbReference type="KEGG" id="pho:PH0679"/>
<dbReference type="eggNOG" id="arCOG01605">
    <property type="taxonomic scope" value="Archaea"/>
</dbReference>
<dbReference type="OrthoDB" id="23478at2157"/>
<dbReference type="Proteomes" id="UP000000752">
    <property type="component" value="Chromosome"/>
</dbReference>
<dbReference type="GO" id="GO:0043807">
    <property type="term" value="F:3-methyl-2-oxobutanoate dehydrogenase (ferredoxin) activity"/>
    <property type="evidence" value="ECO:0007669"/>
    <property type="project" value="UniProtKB-EC"/>
</dbReference>
<dbReference type="GO" id="GO:0051539">
    <property type="term" value="F:4 iron, 4 sulfur cluster binding"/>
    <property type="evidence" value="ECO:0007669"/>
    <property type="project" value="UniProtKB-KW"/>
</dbReference>
<dbReference type="GO" id="GO:0046872">
    <property type="term" value="F:metal ion binding"/>
    <property type="evidence" value="ECO:0007669"/>
    <property type="project" value="UniProtKB-KW"/>
</dbReference>
<dbReference type="Gene3D" id="3.30.70.20">
    <property type="match status" value="2"/>
</dbReference>
<dbReference type="InterPro" id="IPR017896">
    <property type="entry name" value="4Fe4S_Fe-S-bd"/>
</dbReference>
<dbReference type="InterPro" id="IPR017900">
    <property type="entry name" value="4Fe4S_Fe_S_CS"/>
</dbReference>
<dbReference type="InterPro" id="IPR011898">
    <property type="entry name" value="PorD_KorD"/>
</dbReference>
<dbReference type="NCBIfam" id="TIGR02179">
    <property type="entry name" value="PorD_KorD"/>
    <property type="match status" value="1"/>
</dbReference>
<dbReference type="NCBIfam" id="NF007202">
    <property type="entry name" value="PRK09623.1"/>
    <property type="match status" value="1"/>
</dbReference>
<dbReference type="PANTHER" id="PTHR43724">
    <property type="entry name" value="PYRUVATE SYNTHASE SUBUNIT PORD"/>
    <property type="match status" value="1"/>
</dbReference>
<dbReference type="PANTHER" id="PTHR43724:SF1">
    <property type="entry name" value="PYRUVATE SYNTHASE SUBUNIT PORD"/>
    <property type="match status" value="1"/>
</dbReference>
<dbReference type="Pfam" id="PF14697">
    <property type="entry name" value="Fer4_21"/>
    <property type="match status" value="1"/>
</dbReference>
<dbReference type="SUPFAM" id="SSF54862">
    <property type="entry name" value="4Fe-4S ferredoxins"/>
    <property type="match status" value="1"/>
</dbReference>
<dbReference type="PROSITE" id="PS00198">
    <property type="entry name" value="4FE4S_FER_1"/>
    <property type="match status" value="2"/>
</dbReference>
<dbReference type="PROSITE" id="PS51379">
    <property type="entry name" value="4FE4S_FER_2"/>
    <property type="match status" value="2"/>
</dbReference>
<accession>O58412</accession>
<reference key="1">
    <citation type="journal article" date="1998" name="DNA Res.">
        <title>Complete sequence and gene organization of the genome of a hyper-thermophilic archaebacterium, Pyrococcus horikoshii OT3.</title>
        <authorList>
            <person name="Kawarabayasi Y."/>
            <person name="Sawada M."/>
            <person name="Horikawa H."/>
            <person name="Haikawa Y."/>
            <person name="Hino Y."/>
            <person name="Yamamoto S."/>
            <person name="Sekine M."/>
            <person name="Baba S."/>
            <person name="Kosugi H."/>
            <person name="Hosoyama A."/>
            <person name="Nagai Y."/>
            <person name="Sakai M."/>
            <person name="Ogura K."/>
            <person name="Otsuka R."/>
            <person name="Nakazawa H."/>
            <person name="Takamiya M."/>
            <person name="Ohfuku Y."/>
            <person name="Funahashi T."/>
            <person name="Tanaka T."/>
            <person name="Kudoh Y."/>
            <person name="Yamazaki J."/>
            <person name="Kushida N."/>
            <person name="Oguchi A."/>
            <person name="Aoki K."/>
            <person name="Yoshizawa T."/>
            <person name="Nakamura Y."/>
            <person name="Robb F.T."/>
            <person name="Horikoshi K."/>
            <person name="Masuchi Y."/>
            <person name="Shizuya H."/>
            <person name="Kikuchi H."/>
        </authorList>
    </citation>
    <scope>NUCLEOTIDE SEQUENCE [LARGE SCALE GENOMIC DNA]</scope>
    <source>
        <strain>ATCC 700860 / DSM 12428 / JCM 9974 / NBRC 100139 / OT-3</strain>
    </source>
</reference>
<keyword id="KW-0004">4Fe-4S</keyword>
<keyword id="KW-0249">Electron transport</keyword>
<keyword id="KW-0408">Iron</keyword>
<keyword id="KW-0411">Iron-sulfur</keyword>
<keyword id="KW-0479">Metal-binding</keyword>
<keyword id="KW-0560">Oxidoreductase</keyword>
<keyword id="KW-0677">Repeat</keyword>
<keyword id="KW-0813">Transport</keyword>
<organism>
    <name type="scientific">Pyrococcus horikoshii (strain ATCC 700860 / DSM 12428 / JCM 9974 / NBRC 100139 / OT-3)</name>
    <dbReference type="NCBI Taxonomy" id="70601"/>
    <lineage>
        <taxon>Archaea</taxon>
        <taxon>Methanobacteriati</taxon>
        <taxon>Methanobacteriota</taxon>
        <taxon>Thermococci</taxon>
        <taxon>Thermococcales</taxon>
        <taxon>Thermococcaceae</taxon>
        <taxon>Pyrococcus</taxon>
    </lineage>
</organism>